<comment type="function">
    <text evidence="1 5">Probably involved in the RNA silencing pathway. May bind to short RNAs such as microRNAs (miRNAs) or short interfering RNAs (siRNAs), and represses the translation of mRNAs which are complementary to them (By similarity). Plays a role in the maintenance of the indeterminate state of the stem cells in the shoot apical meristem (SAM). Regulates leaf formation through vascular development and may be involved in determining the central domain of the leaf founder region.</text>
</comment>
<comment type="subcellular location">
    <subcellularLocation>
        <location evidence="5">Cytoplasm</location>
    </subcellularLocation>
</comment>
<comment type="developmental stage">
    <text evidence="5">Expressed in the center of the leaf primordia at plastochron 1 (P1) stage. In the P2 leaf primordia, expressed in the mid-vein and the future large veins. In P3 and P4, expressed in the vascular regions and the future bundle sheath extension cells. Expression in leaf primordia quickly disappears after P4 stage. In the inflorescence meristem, expressed at the predicted site of the next bract, and then in the vascular tissue of the developing rachis-branch. In developing floral organs, expressed in the adaxial side of the palea, lemma and stamen.</text>
</comment>
<comment type="disruption phenotype">
    <text evidence="5">Malformed leaves with an altered vascular arrangement and abnormal internal structure. Aberrant SAM with reduced OSH1 gene expression.</text>
</comment>
<comment type="similarity">
    <text evidence="6">Belongs to the argonaute family. Ago subfamily.</text>
</comment>
<comment type="sequence caution" evidence="6">
    <conflict type="erroneous gene model prediction">
        <sequence resource="EMBL-CDS" id="BAF19902"/>
    </conflict>
</comment>
<evidence type="ECO:0000250" key="1"/>
<evidence type="ECO:0000255" key="2">
    <source>
        <dbReference type="PROSITE-ProRule" id="PRU00142"/>
    </source>
</evidence>
<evidence type="ECO:0000255" key="3">
    <source>
        <dbReference type="PROSITE-ProRule" id="PRU00150"/>
    </source>
</evidence>
<evidence type="ECO:0000256" key="4">
    <source>
        <dbReference type="SAM" id="MobiDB-lite"/>
    </source>
</evidence>
<evidence type="ECO:0000269" key="5">
    <source>
    </source>
</evidence>
<evidence type="ECO:0000305" key="6"/>
<gene>
    <name type="primary">PHN1</name>
    <name type="ordered locus">Os06g0597400</name>
    <name type="ordered locus">LOC_Os06g39640</name>
    <name type="ORF">P0417D05.31</name>
</gene>
<sequence length="979" mass="108418">MLEVLDMAPPRHQPAAGKAGGGRGHGHGHGHGGGGGGPAARKQPLQSSMAQPKAETAAATAAVAPPEGGKKCGGGGGRRRGGRGRGGRAGAGPGPGLAAAPAVVVAPAARAVIGPPVASKGLSFCRRPGFGTVGARCVVKANHFLAELPDKDLTQYDVKITPEVSSRSVNRAIMSELVRLYHDSDLGGRLPAYDGRKNLYTAGTLPFDAREFVVRLTDDDDGTGVPPREREYRVAIKFAARADLHHLRQFIAGRQADAPQEALQVLDIVLRELANRRYVSIGRSFYSPDIRKPQRLGDGLQSWCGFYQSIRPTQMGLSLNIDMSSTAFIEPLPVIEFVAQILGKDVISRPLSDANRIKIKKALRGVKVEVTHRGNVRRKYRISGLTTQPTHELIFPIDDQMNMKSVVEYFKEMYGFTIQHPHLPCLQVGNQKKANYLPMEACKIVEGQRYTKRLNEKQITSLLKVTCRRPREQEMDILQTVQQNGYEQDPYAKEFGINISEKLTSVEARVLPAPWLKYHDTGKEKECLPQVGQWNMVNKKVINGCKVNHWACINFSRSVQETTARGFCQELAQMCQISGMEFNSEPVIPIYSARPDQVEKALKHVYNMSLNKLKGKELELLLAILPDNNGSLYGDIKRICETDLGLISQCCLTKHVFKISKQYLANVSLKINVKMGGRNTVLLDAISWRIPLVSDIPTIIFGADVTHPETGEDSSPSIAAVVASQDWPEVTKYAGLVCAQAHRQELIQDLYKTWHDPQRGTVTGGMIRELLISFRKATGQKPLRIIFYRDGVSEGQFYQVLLYELDAIRKACASLEPNYQPPVTFVVVQKRHHTRLFANNHKDRSSTDKSGNILPGTVVDSKICHPSEFDFYLCSHAGIQGTSRPAHYHVLWDENNFTADEMQTLTNNLCYTYARCTRSVSVVPPAYYAHLAAFRARFYMEPEMSENQTTSKSSTGTNGTSVKPLPAVKEKVKRVMFYC</sequence>
<reference key="1">
    <citation type="journal article" date="2002" name="Plant J.">
        <title>OsPNH1 regulates leaf development and maintenance of the shoot apical meristem in rice.</title>
        <authorList>
            <person name="Nishimura A."/>
            <person name="Ito M."/>
            <person name="Kamiya N."/>
            <person name="Sato Y."/>
            <person name="Matsuoka M."/>
        </authorList>
    </citation>
    <scope>NUCLEOTIDE SEQUENCE [MRNA]</scope>
    <scope>FUNCTION</scope>
    <scope>SUBCELLULAR LOCATION</scope>
    <scope>DEVELOPMENTAL STAGE</scope>
    <scope>DISRUPTION PHENOTYPE</scope>
    <source>
        <strain>cv. Taichung 65</strain>
        <tissue>Embryo</tissue>
    </source>
</reference>
<reference key="2">
    <citation type="journal article" date="2005" name="Nature">
        <title>The map-based sequence of the rice genome.</title>
        <authorList>
            <consortium name="International rice genome sequencing project (IRGSP)"/>
        </authorList>
    </citation>
    <scope>NUCLEOTIDE SEQUENCE [LARGE SCALE GENOMIC DNA]</scope>
    <source>
        <strain>cv. Nipponbare</strain>
    </source>
</reference>
<reference key="3">
    <citation type="journal article" date="2008" name="Nucleic Acids Res.">
        <title>The rice annotation project database (RAP-DB): 2008 update.</title>
        <authorList>
            <consortium name="The rice annotation project (RAP)"/>
        </authorList>
    </citation>
    <scope>GENOME REANNOTATION</scope>
    <source>
        <strain>cv. Nipponbare</strain>
    </source>
</reference>
<reference key="4">
    <citation type="journal article" date="2013" name="Rice">
        <title>Improvement of the Oryza sativa Nipponbare reference genome using next generation sequence and optical map data.</title>
        <authorList>
            <person name="Kawahara Y."/>
            <person name="de la Bastide M."/>
            <person name="Hamilton J.P."/>
            <person name="Kanamori H."/>
            <person name="McCombie W.R."/>
            <person name="Ouyang S."/>
            <person name="Schwartz D.C."/>
            <person name="Tanaka T."/>
            <person name="Wu J."/>
            <person name="Zhou S."/>
            <person name="Childs K.L."/>
            <person name="Davidson R.M."/>
            <person name="Lin H."/>
            <person name="Quesada-Ocampo L."/>
            <person name="Vaillancourt B."/>
            <person name="Sakai H."/>
            <person name="Lee S.S."/>
            <person name="Kim J."/>
            <person name="Numa H."/>
            <person name="Itoh T."/>
            <person name="Buell C.R."/>
            <person name="Matsumoto T."/>
        </authorList>
    </citation>
    <scope>GENOME REANNOTATION</scope>
    <source>
        <strain>cv. Nipponbare</strain>
    </source>
</reference>
<reference key="5">
    <citation type="journal article" date="2008" name="BMC Genomics">
        <title>Genome-wide identification, organization and phylogenetic analysis of dicer-like, argonaute and RNA-dependent RNA polymerase gene families and their expression analysis during reproductive development and stress in rice.</title>
        <authorList>
            <person name="Kapoor M."/>
            <person name="Arora R."/>
            <person name="Lama T."/>
            <person name="Nijhawan A."/>
            <person name="Khurana J.P."/>
            <person name="Tyagi A.K."/>
            <person name="Kapoor S."/>
        </authorList>
    </citation>
    <scope>GENE FAMILY</scope>
    <scope>NOMENCLATURE</scope>
</reference>
<name>PNH1_ORYSJ</name>
<protein>
    <recommendedName>
        <fullName>Protein argonaute PNH1</fullName>
    </recommendedName>
    <alternativeName>
        <fullName>Protein PINHEAD homolog 1</fullName>
        <shortName>OsPNH1</shortName>
    </alternativeName>
</protein>
<dbReference type="EMBL" id="AB081950">
    <property type="protein sequence ID" value="BAB96813.1"/>
    <property type="molecule type" value="mRNA"/>
</dbReference>
<dbReference type="EMBL" id="AP004236">
    <property type="protein sequence ID" value="BAD33046.1"/>
    <property type="molecule type" value="Genomic_DNA"/>
</dbReference>
<dbReference type="EMBL" id="AP008212">
    <property type="protein sequence ID" value="BAF19902.1"/>
    <property type="status" value="ALT_SEQ"/>
    <property type="molecule type" value="Genomic_DNA"/>
</dbReference>
<dbReference type="EMBL" id="AP014962">
    <property type="status" value="NOT_ANNOTATED_CDS"/>
    <property type="molecule type" value="Genomic_DNA"/>
</dbReference>
<dbReference type="RefSeq" id="XP_015643801.1">
    <property type="nucleotide sequence ID" value="XM_015788315.1"/>
</dbReference>
<dbReference type="RefSeq" id="XP_015643802.1">
    <property type="nucleotide sequence ID" value="XM_015788316.1"/>
</dbReference>
<dbReference type="SMR" id="Q69VD5"/>
<dbReference type="FunCoup" id="Q69VD5">
    <property type="interactions" value="2790"/>
</dbReference>
<dbReference type="STRING" id="39947.Q69VD5"/>
<dbReference type="PaxDb" id="39947-Q69VD5"/>
<dbReference type="EnsemblPlants" id="Os06t0597400-01">
    <property type="protein sequence ID" value="Os06t0597400-01"/>
    <property type="gene ID" value="Os06g0597400"/>
</dbReference>
<dbReference type="GeneID" id="9269490"/>
<dbReference type="Gramene" id="Os06t0597400-01">
    <property type="protein sequence ID" value="Os06t0597400-01"/>
    <property type="gene ID" value="Os06g0597400"/>
</dbReference>
<dbReference type="KEGG" id="osa:9269490"/>
<dbReference type="InParanoid" id="Q69VD5"/>
<dbReference type="OrthoDB" id="10252740at2759"/>
<dbReference type="PlantReactome" id="R-OSA-9627657">
    <property type="pathway name" value="Regulation of leaf development"/>
</dbReference>
<dbReference type="Proteomes" id="UP000000763">
    <property type="component" value="Chromosome 6"/>
</dbReference>
<dbReference type="Proteomes" id="UP000059680">
    <property type="component" value="Chromosome 6"/>
</dbReference>
<dbReference type="GO" id="GO:0005737">
    <property type="term" value="C:cytoplasm"/>
    <property type="evidence" value="ECO:0000314"/>
    <property type="project" value="Gramene"/>
</dbReference>
<dbReference type="GO" id="GO:0005634">
    <property type="term" value="C:nucleus"/>
    <property type="evidence" value="ECO:0000318"/>
    <property type="project" value="GO_Central"/>
</dbReference>
<dbReference type="GO" id="GO:0003723">
    <property type="term" value="F:RNA binding"/>
    <property type="evidence" value="ECO:0000318"/>
    <property type="project" value="GO_Central"/>
</dbReference>
<dbReference type="GO" id="GO:0004521">
    <property type="term" value="F:RNA endonuclease activity"/>
    <property type="evidence" value="ECO:0000318"/>
    <property type="project" value="GO_Central"/>
</dbReference>
<dbReference type="GO" id="GO:0048366">
    <property type="term" value="P:leaf development"/>
    <property type="evidence" value="ECO:0000315"/>
    <property type="project" value="Gramene"/>
</dbReference>
<dbReference type="GO" id="GO:0031047">
    <property type="term" value="P:regulatory ncRNA-mediated gene silencing"/>
    <property type="evidence" value="ECO:0000318"/>
    <property type="project" value="GO_Central"/>
</dbReference>
<dbReference type="GO" id="GO:0019827">
    <property type="term" value="P:stem cell population maintenance"/>
    <property type="evidence" value="ECO:0000315"/>
    <property type="project" value="Gramene"/>
</dbReference>
<dbReference type="CDD" id="cd02846">
    <property type="entry name" value="PAZ_argonaute_like"/>
    <property type="match status" value="1"/>
</dbReference>
<dbReference type="CDD" id="cd04657">
    <property type="entry name" value="Piwi_ago-like"/>
    <property type="match status" value="1"/>
</dbReference>
<dbReference type="FunFam" id="3.40.50.2300:FF:000110">
    <property type="entry name" value="Argonaute 10"/>
    <property type="match status" value="1"/>
</dbReference>
<dbReference type="FunFam" id="3.30.420.10:FF:000013">
    <property type="entry name" value="protein argonaute 10-like"/>
    <property type="match status" value="1"/>
</dbReference>
<dbReference type="FunFam" id="2.170.260.10:FF:000001">
    <property type="entry name" value="Protein argonaute-2"/>
    <property type="match status" value="1"/>
</dbReference>
<dbReference type="Gene3D" id="3.40.50.2300">
    <property type="match status" value="1"/>
</dbReference>
<dbReference type="Gene3D" id="2.170.260.10">
    <property type="entry name" value="paz domain"/>
    <property type="match status" value="1"/>
</dbReference>
<dbReference type="Gene3D" id="3.30.420.10">
    <property type="entry name" value="Ribonuclease H-like superfamily/Ribonuclease H"/>
    <property type="match status" value="1"/>
</dbReference>
<dbReference type="InterPro" id="IPR014811">
    <property type="entry name" value="ArgoL1"/>
</dbReference>
<dbReference type="InterPro" id="IPR032472">
    <property type="entry name" value="ArgoL2"/>
</dbReference>
<dbReference type="InterPro" id="IPR032473">
    <property type="entry name" value="Argonaute_Mid_dom"/>
</dbReference>
<dbReference type="InterPro" id="IPR032474">
    <property type="entry name" value="Argonaute_N"/>
</dbReference>
<dbReference type="InterPro" id="IPR003100">
    <property type="entry name" value="PAZ_dom"/>
</dbReference>
<dbReference type="InterPro" id="IPR036085">
    <property type="entry name" value="PAZ_dom_sf"/>
</dbReference>
<dbReference type="InterPro" id="IPR003165">
    <property type="entry name" value="Piwi"/>
</dbReference>
<dbReference type="InterPro" id="IPR045246">
    <property type="entry name" value="Piwi_ago-like"/>
</dbReference>
<dbReference type="InterPro" id="IPR012337">
    <property type="entry name" value="RNaseH-like_sf"/>
</dbReference>
<dbReference type="InterPro" id="IPR036397">
    <property type="entry name" value="RNaseH_sf"/>
</dbReference>
<dbReference type="PANTHER" id="PTHR22891">
    <property type="entry name" value="EUKARYOTIC TRANSLATION INITIATION FACTOR 2C"/>
    <property type="match status" value="1"/>
</dbReference>
<dbReference type="Pfam" id="PF08699">
    <property type="entry name" value="ArgoL1"/>
    <property type="match status" value="1"/>
</dbReference>
<dbReference type="Pfam" id="PF16488">
    <property type="entry name" value="ArgoL2"/>
    <property type="match status" value="1"/>
</dbReference>
<dbReference type="Pfam" id="PF16487">
    <property type="entry name" value="ArgoMid"/>
    <property type="match status" value="1"/>
</dbReference>
<dbReference type="Pfam" id="PF16486">
    <property type="entry name" value="ArgoN"/>
    <property type="match status" value="1"/>
</dbReference>
<dbReference type="Pfam" id="PF02170">
    <property type="entry name" value="PAZ"/>
    <property type="match status" value="1"/>
</dbReference>
<dbReference type="Pfam" id="PF02171">
    <property type="entry name" value="Piwi"/>
    <property type="match status" value="1"/>
</dbReference>
<dbReference type="SMART" id="SM01163">
    <property type="entry name" value="DUF1785"/>
    <property type="match status" value="1"/>
</dbReference>
<dbReference type="SMART" id="SM00949">
    <property type="entry name" value="PAZ"/>
    <property type="match status" value="1"/>
</dbReference>
<dbReference type="SMART" id="SM00950">
    <property type="entry name" value="Piwi"/>
    <property type="match status" value="1"/>
</dbReference>
<dbReference type="SUPFAM" id="SSF101690">
    <property type="entry name" value="PAZ domain"/>
    <property type="match status" value="1"/>
</dbReference>
<dbReference type="SUPFAM" id="SSF53098">
    <property type="entry name" value="Ribonuclease H-like"/>
    <property type="match status" value="1"/>
</dbReference>
<dbReference type="PROSITE" id="PS50821">
    <property type="entry name" value="PAZ"/>
    <property type="match status" value="1"/>
</dbReference>
<dbReference type="PROSITE" id="PS50822">
    <property type="entry name" value="PIWI"/>
    <property type="match status" value="1"/>
</dbReference>
<accession>Q69VD5</accession>
<accession>Q0DB71</accession>
<accession>Q8LP00</accession>
<keyword id="KW-0963">Cytoplasm</keyword>
<keyword id="KW-0217">Developmental protein</keyword>
<keyword id="KW-1185">Reference proteome</keyword>
<keyword id="KW-0943">RNA-mediated gene silencing</keyword>
<organism>
    <name type="scientific">Oryza sativa subsp. japonica</name>
    <name type="common">Rice</name>
    <dbReference type="NCBI Taxonomy" id="39947"/>
    <lineage>
        <taxon>Eukaryota</taxon>
        <taxon>Viridiplantae</taxon>
        <taxon>Streptophyta</taxon>
        <taxon>Embryophyta</taxon>
        <taxon>Tracheophyta</taxon>
        <taxon>Spermatophyta</taxon>
        <taxon>Magnoliopsida</taxon>
        <taxon>Liliopsida</taxon>
        <taxon>Poales</taxon>
        <taxon>Poaceae</taxon>
        <taxon>BOP clade</taxon>
        <taxon>Oryzoideae</taxon>
        <taxon>Oryzeae</taxon>
        <taxon>Oryzinae</taxon>
        <taxon>Oryza</taxon>
        <taxon>Oryza sativa</taxon>
    </lineage>
</organism>
<proteinExistence type="evidence at transcript level"/>
<feature type="chain" id="PRO_0000378443" description="Protein argonaute PNH1">
    <location>
        <begin position="1"/>
        <end position="979"/>
    </location>
</feature>
<feature type="domain" description="PAZ" evidence="2">
    <location>
        <begin position="333"/>
        <end position="446"/>
    </location>
</feature>
<feature type="domain" description="Piwi" evidence="3">
    <location>
        <begin position="620"/>
        <end position="941"/>
    </location>
</feature>
<feature type="region of interest" description="Disordered" evidence="4">
    <location>
        <begin position="1"/>
        <end position="95"/>
    </location>
</feature>
<feature type="compositionally biased region" description="Low complexity" evidence="4">
    <location>
        <begin position="54"/>
        <end position="67"/>
    </location>
</feature>
<feature type="compositionally biased region" description="Basic residues" evidence="4">
    <location>
        <begin position="77"/>
        <end position="86"/>
    </location>
</feature>
<feature type="sequence conflict" description="In Ref. 1; BAB96813." evidence="6" ref="1">
    <original>E</original>
    <variation>Q</variation>
    <location>
        <position position="408"/>
    </location>
</feature>
<feature type="sequence conflict" description="In Ref. 1; BAB96813." evidence="6" ref="1">
    <original>TV</original>
    <variation>S</variation>
    <location>
        <begin position="480"/>
        <end position="481"/>
    </location>
</feature>
<feature type="sequence conflict" description="In Ref. 1; BAB96813." evidence="6" ref="1">
    <original>G</original>
    <variation>V</variation>
    <location>
        <position position="522"/>
    </location>
</feature>
<feature type="sequence conflict" description="In Ref. 1; BAB96813." evidence="6" ref="1">
    <original>N</original>
    <variation>I</variation>
    <location>
        <position position="818"/>
    </location>
</feature>